<feature type="chain" id="PRO_1000043255" description="Pantothenate kinase">
    <location>
        <begin position="1"/>
        <end position="316"/>
    </location>
</feature>
<feature type="binding site" evidence="1">
    <location>
        <begin position="95"/>
        <end position="102"/>
    </location>
    <ligand>
        <name>ATP</name>
        <dbReference type="ChEBI" id="CHEBI:30616"/>
    </ligand>
</feature>
<comment type="catalytic activity">
    <reaction evidence="1">
        <text>(R)-pantothenate + ATP = (R)-4'-phosphopantothenate + ADP + H(+)</text>
        <dbReference type="Rhea" id="RHEA:16373"/>
        <dbReference type="ChEBI" id="CHEBI:10986"/>
        <dbReference type="ChEBI" id="CHEBI:15378"/>
        <dbReference type="ChEBI" id="CHEBI:29032"/>
        <dbReference type="ChEBI" id="CHEBI:30616"/>
        <dbReference type="ChEBI" id="CHEBI:456216"/>
        <dbReference type="EC" id="2.7.1.33"/>
    </reaction>
</comment>
<comment type="pathway">
    <text evidence="1">Cofactor biosynthesis; coenzyme A biosynthesis; CoA from (R)-pantothenate: step 1/5.</text>
</comment>
<comment type="subcellular location">
    <subcellularLocation>
        <location evidence="1">Cytoplasm</location>
    </subcellularLocation>
</comment>
<comment type="similarity">
    <text evidence="1">Belongs to the prokaryotic pantothenate kinase family.</text>
</comment>
<evidence type="ECO:0000255" key="1">
    <source>
        <dbReference type="HAMAP-Rule" id="MF_00215"/>
    </source>
</evidence>
<gene>
    <name evidence="1" type="primary">coaA</name>
    <name type="ordered locus">Shewmr7_0178</name>
</gene>
<name>COAA_SHESR</name>
<protein>
    <recommendedName>
        <fullName evidence="1">Pantothenate kinase</fullName>
        <ecNumber evidence="1">2.7.1.33</ecNumber>
    </recommendedName>
    <alternativeName>
        <fullName evidence="1">Pantothenic acid kinase</fullName>
    </alternativeName>
</protein>
<dbReference type="EC" id="2.7.1.33" evidence="1"/>
<dbReference type="EMBL" id="CP000444">
    <property type="protein sequence ID" value="ABI41184.1"/>
    <property type="molecule type" value="Genomic_DNA"/>
</dbReference>
<dbReference type="SMR" id="Q0I0C1"/>
<dbReference type="KEGG" id="shm:Shewmr7_0178"/>
<dbReference type="HOGENOM" id="CLU_053818_1_1_6"/>
<dbReference type="UniPathway" id="UPA00241">
    <property type="reaction ID" value="UER00352"/>
</dbReference>
<dbReference type="GO" id="GO:0005737">
    <property type="term" value="C:cytoplasm"/>
    <property type="evidence" value="ECO:0007669"/>
    <property type="project" value="UniProtKB-SubCell"/>
</dbReference>
<dbReference type="GO" id="GO:0005524">
    <property type="term" value="F:ATP binding"/>
    <property type="evidence" value="ECO:0007669"/>
    <property type="project" value="UniProtKB-UniRule"/>
</dbReference>
<dbReference type="GO" id="GO:0004594">
    <property type="term" value="F:pantothenate kinase activity"/>
    <property type="evidence" value="ECO:0007669"/>
    <property type="project" value="UniProtKB-UniRule"/>
</dbReference>
<dbReference type="GO" id="GO:0015937">
    <property type="term" value="P:coenzyme A biosynthetic process"/>
    <property type="evidence" value="ECO:0007669"/>
    <property type="project" value="UniProtKB-UniRule"/>
</dbReference>
<dbReference type="CDD" id="cd02025">
    <property type="entry name" value="PanK"/>
    <property type="match status" value="1"/>
</dbReference>
<dbReference type="FunFam" id="3.40.50.300:FF:000242">
    <property type="entry name" value="Pantothenate kinase"/>
    <property type="match status" value="1"/>
</dbReference>
<dbReference type="Gene3D" id="3.40.50.300">
    <property type="entry name" value="P-loop containing nucleotide triphosphate hydrolases"/>
    <property type="match status" value="1"/>
</dbReference>
<dbReference type="HAMAP" id="MF_00215">
    <property type="entry name" value="Pantothen_kinase_1"/>
    <property type="match status" value="1"/>
</dbReference>
<dbReference type="InterPro" id="IPR027417">
    <property type="entry name" value="P-loop_NTPase"/>
</dbReference>
<dbReference type="InterPro" id="IPR004566">
    <property type="entry name" value="PanK"/>
</dbReference>
<dbReference type="InterPro" id="IPR006083">
    <property type="entry name" value="PRK/URK"/>
</dbReference>
<dbReference type="NCBIfam" id="TIGR00554">
    <property type="entry name" value="panK_bact"/>
    <property type="match status" value="1"/>
</dbReference>
<dbReference type="PANTHER" id="PTHR10285">
    <property type="entry name" value="URIDINE KINASE"/>
    <property type="match status" value="1"/>
</dbReference>
<dbReference type="Pfam" id="PF00485">
    <property type="entry name" value="PRK"/>
    <property type="match status" value="1"/>
</dbReference>
<dbReference type="PIRSF" id="PIRSF000545">
    <property type="entry name" value="Pantothenate_kin"/>
    <property type="match status" value="1"/>
</dbReference>
<dbReference type="SUPFAM" id="SSF52540">
    <property type="entry name" value="P-loop containing nucleoside triphosphate hydrolases"/>
    <property type="match status" value="1"/>
</dbReference>
<proteinExistence type="inferred from homology"/>
<organism>
    <name type="scientific">Shewanella sp. (strain MR-7)</name>
    <dbReference type="NCBI Taxonomy" id="60481"/>
    <lineage>
        <taxon>Bacteria</taxon>
        <taxon>Pseudomonadati</taxon>
        <taxon>Pseudomonadota</taxon>
        <taxon>Gammaproteobacteria</taxon>
        <taxon>Alteromonadales</taxon>
        <taxon>Shewanellaceae</taxon>
        <taxon>Shewanella</taxon>
    </lineage>
</organism>
<reference key="1">
    <citation type="submission" date="2006-08" db="EMBL/GenBank/DDBJ databases">
        <title>Complete sequence of chromosome 1 of Shewanella sp. MR-7.</title>
        <authorList>
            <person name="Copeland A."/>
            <person name="Lucas S."/>
            <person name="Lapidus A."/>
            <person name="Barry K."/>
            <person name="Detter J.C."/>
            <person name="Glavina del Rio T."/>
            <person name="Hammon N."/>
            <person name="Israni S."/>
            <person name="Dalin E."/>
            <person name="Tice H."/>
            <person name="Pitluck S."/>
            <person name="Kiss H."/>
            <person name="Brettin T."/>
            <person name="Bruce D."/>
            <person name="Han C."/>
            <person name="Tapia R."/>
            <person name="Gilna P."/>
            <person name="Schmutz J."/>
            <person name="Larimer F."/>
            <person name="Land M."/>
            <person name="Hauser L."/>
            <person name="Kyrpides N."/>
            <person name="Mikhailova N."/>
            <person name="Nealson K."/>
            <person name="Konstantinidis K."/>
            <person name="Klappenbach J."/>
            <person name="Tiedje J."/>
            <person name="Richardson P."/>
        </authorList>
    </citation>
    <scope>NUCLEOTIDE SEQUENCE [LARGE SCALE GENOMIC DNA]</scope>
    <source>
        <strain>MR-7</strain>
    </source>
</reference>
<sequence length="316" mass="36056">MTSKNPIQKALYLAFERTQWSVLRDAVPMTLSEQDLENLRGINEKVSLTEVTDIYLPLSRLLNLIVKAKQQRGLVLDEFLGQKPSSSPYIISIAGSVAVGKSTTARILQALLRHWPEHPKVDLVTTDGFLYPLADLKRKGLLQRKGFPESYDMKMLVEFIAAVKSGQAHVNAPIYSHVTYDRIRGQHQTVSQPDILILEGLNVLQTGLDSPVDIRRPFVSDFVDFSIYVDAEEHLLKQWYQERFLQFRKGAFSDEKSYFHHYASLTDDEANVIAAKIWDTINGPNLQLNIQPTRERAHLILQKGQDHLMSHVLLRK</sequence>
<accession>Q0I0C1</accession>
<keyword id="KW-0067">ATP-binding</keyword>
<keyword id="KW-0173">Coenzyme A biosynthesis</keyword>
<keyword id="KW-0963">Cytoplasm</keyword>
<keyword id="KW-0418">Kinase</keyword>
<keyword id="KW-0547">Nucleotide-binding</keyword>
<keyword id="KW-0808">Transferase</keyword>